<dbReference type="EC" id="2.1.1.-" evidence="5 6"/>
<dbReference type="EMBL" id="Z73564">
    <property type="protein sequence ID" value="CAA97923.1"/>
    <property type="molecule type" value="Genomic_DNA"/>
</dbReference>
<dbReference type="EMBL" id="BK006949">
    <property type="protein sequence ID" value="DAA11228.1"/>
    <property type="molecule type" value="Genomic_DNA"/>
</dbReference>
<dbReference type="PIR" id="S65227">
    <property type="entry name" value="S65227"/>
</dbReference>
<dbReference type="RefSeq" id="NP_015116.1">
    <property type="nucleotide sequence ID" value="NM_001184022.1"/>
</dbReference>
<dbReference type="BioGRID" id="35977">
    <property type="interactions" value="45"/>
</dbReference>
<dbReference type="DIP" id="DIP-3971N"/>
<dbReference type="FunCoup" id="Q08961">
    <property type="interactions" value="388"/>
</dbReference>
<dbReference type="IntAct" id="Q08961">
    <property type="interactions" value="6"/>
</dbReference>
<dbReference type="MINT" id="Q08961"/>
<dbReference type="STRING" id="4932.YPL208W"/>
<dbReference type="iPTMnet" id="Q08961"/>
<dbReference type="PaxDb" id="4932-YPL208W"/>
<dbReference type="PeptideAtlas" id="Q08961"/>
<dbReference type="EnsemblFungi" id="YPL208W_mRNA">
    <property type="protein sequence ID" value="YPL208W"/>
    <property type="gene ID" value="YPL208W"/>
</dbReference>
<dbReference type="GeneID" id="855893"/>
<dbReference type="KEGG" id="sce:YPL208W"/>
<dbReference type="AGR" id="SGD:S000006129"/>
<dbReference type="SGD" id="S000006129">
    <property type="gene designation" value="RKM1"/>
</dbReference>
<dbReference type="VEuPathDB" id="FungiDB:YPL208W"/>
<dbReference type="eggNOG" id="KOG1337">
    <property type="taxonomic scope" value="Eukaryota"/>
</dbReference>
<dbReference type="GeneTree" id="ENSGT00940000153577"/>
<dbReference type="HOGENOM" id="CLU_030667_2_0_1"/>
<dbReference type="InParanoid" id="Q08961"/>
<dbReference type="OMA" id="FLWSHLI"/>
<dbReference type="OrthoDB" id="42889at2759"/>
<dbReference type="BioCyc" id="YEAST:G3O-34099-MONOMER"/>
<dbReference type="BioGRID-ORCS" id="855893">
    <property type="hits" value="0 hits in 10 CRISPR screens"/>
</dbReference>
<dbReference type="PRO" id="PR:Q08961"/>
<dbReference type="Proteomes" id="UP000002311">
    <property type="component" value="Chromosome XVI"/>
</dbReference>
<dbReference type="RNAct" id="Q08961">
    <property type="molecule type" value="protein"/>
</dbReference>
<dbReference type="GO" id="GO:0005737">
    <property type="term" value="C:cytoplasm"/>
    <property type="evidence" value="ECO:0007005"/>
    <property type="project" value="SGD"/>
</dbReference>
<dbReference type="GO" id="GO:0005634">
    <property type="term" value="C:nucleus"/>
    <property type="evidence" value="ECO:0007005"/>
    <property type="project" value="SGD"/>
</dbReference>
<dbReference type="GO" id="GO:0016279">
    <property type="term" value="F:protein-lysine N-methyltransferase activity"/>
    <property type="evidence" value="ECO:0000314"/>
    <property type="project" value="SGD"/>
</dbReference>
<dbReference type="GO" id="GO:0032259">
    <property type="term" value="P:methylation"/>
    <property type="evidence" value="ECO:0007669"/>
    <property type="project" value="UniProtKB-KW"/>
</dbReference>
<dbReference type="Gene3D" id="3.90.1410.10">
    <property type="entry name" value="set domain protein methyltransferase, domain 1"/>
    <property type="match status" value="1"/>
</dbReference>
<dbReference type="InterPro" id="IPR017119">
    <property type="entry name" value="Efm1/Rkm1"/>
</dbReference>
<dbReference type="InterPro" id="IPR001214">
    <property type="entry name" value="SET_dom"/>
</dbReference>
<dbReference type="InterPro" id="IPR046341">
    <property type="entry name" value="SET_dom_sf"/>
</dbReference>
<dbReference type="InterPro" id="IPR050600">
    <property type="entry name" value="SETD3_SETD6_MTase"/>
</dbReference>
<dbReference type="PANTHER" id="PTHR13271:SF147">
    <property type="entry name" value="PROTEIN-LYSINE N-METHYLTRANSFERASE EFM1-RELATED"/>
    <property type="match status" value="1"/>
</dbReference>
<dbReference type="PANTHER" id="PTHR13271">
    <property type="entry name" value="UNCHARACTERIZED PUTATIVE METHYLTRANSFERASE"/>
    <property type="match status" value="1"/>
</dbReference>
<dbReference type="PIRSF" id="PIRSF037136">
    <property type="entry name" value="Ribosomal_Lys-mtfrase-1"/>
    <property type="match status" value="1"/>
</dbReference>
<dbReference type="SUPFAM" id="SSF82199">
    <property type="entry name" value="SET domain"/>
    <property type="match status" value="1"/>
</dbReference>
<dbReference type="PROSITE" id="PS50280">
    <property type="entry name" value="SET"/>
    <property type="match status" value="1"/>
</dbReference>
<gene>
    <name evidence="7" type="primary">RKM1</name>
    <name evidence="9" type="ordered locus">YPL208W</name>
</gene>
<protein>
    <recommendedName>
        <fullName evidence="7">Ribosomal lysine N-methyltransferase 1</fullName>
        <ecNumber evidence="5 6">2.1.1.-</ecNumber>
    </recommendedName>
</protein>
<proteinExistence type="evidence at protein level"/>
<organism>
    <name type="scientific">Saccharomyces cerevisiae (strain ATCC 204508 / S288c)</name>
    <name type="common">Baker's yeast</name>
    <dbReference type="NCBI Taxonomy" id="559292"/>
    <lineage>
        <taxon>Eukaryota</taxon>
        <taxon>Fungi</taxon>
        <taxon>Dikarya</taxon>
        <taxon>Ascomycota</taxon>
        <taxon>Saccharomycotina</taxon>
        <taxon>Saccharomycetes</taxon>
        <taxon>Saccharomycetales</taxon>
        <taxon>Saccharomycetaceae</taxon>
        <taxon>Saccharomyces</taxon>
    </lineage>
</organism>
<keyword id="KW-0175">Coiled coil</keyword>
<keyword id="KW-0963">Cytoplasm</keyword>
<keyword id="KW-0489">Methyltransferase</keyword>
<keyword id="KW-0539">Nucleus</keyword>
<keyword id="KW-1185">Reference proteome</keyword>
<keyword id="KW-0949">S-adenosyl-L-methionine</keyword>
<keyword id="KW-0808">Transferase</keyword>
<accession>Q08961</accession>
<accession>D6W3G2</accession>
<sequence length="583" mass="67178">MSSDALKALLQWGASFGVIVPEELKFLYTDLKGIICVCEKDIDNPSIKIPPEIVISRNLPMKFFGLSESTKNINGWLKLFFAKIKFDRDNDTIVDNVRVNDKFKPYLDALPSRLNSPLVWNPSELKRLSSTNIGNSIHEKFEGIFKEWFELVSSSDMFDLERVADDVQTFHNLDELTYEALYEKILKITELQRPTIWYSFPAFLWSHLIFISRAFPEYVLNRNCPDNSIVLLPIVDLLNHDYRSKVKWYPENGWFCYEKIGTASQSRELSNNYGGKGNEELLSGYGFVLEDNIFDSVALKVKLPLDVVSTILETEPSLKLPLLSDYTTYAFENKDCVQQEKKATRSATDYINGVTYFINIQNEQCLEPLLDLFTYLSKAEEEDLHDLRARLQGIQMLRNALQSKLNSITGPPATDDSYAIDPYRVYCADVYTKGQKQILKEALTRLKKLEKTMLSENKHQLLTMSKILKNDPAFAETELPSLFSNEDGEEVIFESTYDLLILWILLKTKKNSYPTKYEWVGQQYTNFKQTAYISDDAKAFHTAYFEKQDDVDLAEVDHAIQFVVDNSFTRTSSTTEETILVRK</sequence>
<evidence type="ECO:0000255" key="1"/>
<evidence type="ECO:0000255" key="2">
    <source>
        <dbReference type="PROSITE-ProRule" id="PRU00190"/>
    </source>
</evidence>
<evidence type="ECO:0000269" key="3">
    <source>
    </source>
</evidence>
<evidence type="ECO:0000269" key="4">
    <source>
    </source>
</evidence>
<evidence type="ECO:0000269" key="5">
    <source>
    </source>
</evidence>
<evidence type="ECO:0000269" key="6">
    <source>
    </source>
</evidence>
<evidence type="ECO:0000303" key="7">
    <source>
    </source>
</evidence>
<evidence type="ECO:0000305" key="8"/>
<evidence type="ECO:0000312" key="9">
    <source>
        <dbReference type="SGD" id="S000006129"/>
    </source>
</evidence>
<reference key="1">
    <citation type="journal article" date="1997" name="Nature">
        <title>The nucleotide sequence of Saccharomyces cerevisiae chromosome XVI.</title>
        <authorList>
            <person name="Bussey H."/>
            <person name="Storms R.K."/>
            <person name="Ahmed A."/>
            <person name="Albermann K."/>
            <person name="Allen E."/>
            <person name="Ansorge W."/>
            <person name="Araujo R."/>
            <person name="Aparicio A."/>
            <person name="Barrell B.G."/>
            <person name="Badcock K."/>
            <person name="Benes V."/>
            <person name="Botstein D."/>
            <person name="Bowman S."/>
            <person name="Brueckner M."/>
            <person name="Carpenter J."/>
            <person name="Cherry J.M."/>
            <person name="Chung E."/>
            <person name="Churcher C.M."/>
            <person name="Coster F."/>
            <person name="Davis K."/>
            <person name="Davis R.W."/>
            <person name="Dietrich F.S."/>
            <person name="Delius H."/>
            <person name="DiPaolo T."/>
            <person name="Dubois E."/>
            <person name="Duesterhoeft A."/>
            <person name="Duncan M."/>
            <person name="Floeth M."/>
            <person name="Fortin N."/>
            <person name="Friesen J.D."/>
            <person name="Fritz C."/>
            <person name="Goffeau A."/>
            <person name="Hall J."/>
            <person name="Hebling U."/>
            <person name="Heumann K."/>
            <person name="Hilbert H."/>
            <person name="Hillier L.W."/>
            <person name="Hunicke-Smith S."/>
            <person name="Hyman R.W."/>
            <person name="Johnston M."/>
            <person name="Kalman S."/>
            <person name="Kleine K."/>
            <person name="Komp C."/>
            <person name="Kurdi O."/>
            <person name="Lashkari D."/>
            <person name="Lew H."/>
            <person name="Lin A."/>
            <person name="Lin D."/>
            <person name="Louis E.J."/>
            <person name="Marathe R."/>
            <person name="Messenguy F."/>
            <person name="Mewes H.-W."/>
            <person name="Mirtipati S."/>
            <person name="Moestl D."/>
            <person name="Mueller-Auer S."/>
            <person name="Namath A."/>
            <person name="Nentwich U."/>
            <person name="Oefner P."/>
            <person name="Pearson D."/>
            <person name="Petel F.X."/>
            <person name="Pohl T.M."/>
            <person name="Purnelle B."/>
            <person name="Rajandream M.A."/>
            <person name="Rechmann S."/>
            <person name="Rieger M."/>
            <person name="Riles L."/>
            <person name="Roberts D."/>
            <person name="Schaefer M."/>
            <person name="Scharfe M."/>
            <person name="Scherens B."/>
            <person name="Schramm S."/>
            <person name="Schroeder M."/>
            <person name="Sdicu A.-M."/>
            <person name="Tettelin H."/>
            <person name="Urrestarazu L.A."/>
            <person name="Ushinsky S."/>
            <person name="Vierendeels F."/>
            <person name="Vissers S."/>
            <person name="Voss H."/>
            <person name="Walsh S.V."/>
            <person name="Wambutt R."/>
            <person name="Wang Y."/>
            <person name="Wedler E."/>
            <person name="Wedler H."/>
            <person name="Winnett E."/>
            <person name="Zhong W.-W."/>
            <person name="Zollner A."/>
            <person name="Vo D.H."/>
            <person name="Hani J."/>
        </authorList>
    </citation>
    <scope>NUCLEOTIDE SEQUENCE [LARGE SCALE GENOMIC DNA]</scope>
    <source>
        <strain>ATCC 204508 / S288c</strain>
    </source>
</reference>
<reference key="2">
    <citation type="journal article" date="2014" name="G3 (Bethesda)">
        <title>The reference genome sequence of Saccharomyces cerevisiae: Then and now.</title>
        <authorList>
            <person name="Engel S.R."/>
            <person name="Dietrich F.S."/>
            <person name="Fisk D.G."/>
            <person name="Binkley G."/>
            <person name="Balakrishnan R."/>
            <person name="Costanzo M.C."/>
            <person name="Dwight S.S."/>
            <person name="Hitz B.C."/>
            <person name="Karra K."/>
            <person name="Nash R.S."/>
            <person name="Weng S."/>
            <person name="Wong E.D."/>
            <person name="Lloyd P."/>
            <person name="Skrzypek M.S."/>
            <person name="Miyasato S.R."/>
            <person name="Simison M."/>
            <person name="Cherry J.M."/>
        </authorList>
    </citation>
    <scope>GENOME REANNOTATION</scope>
    <source>
        <strain>ATCC 204508 / S288c</strain>
    </source>
</reference>
<reference key="3">
    <citation type="journal article" date="2003" name="Nature">
        <title>Global analysis of protein localization in budding yeast.</title>
        <authorList>
            <person name="Huh W.-K."/>
            <person name="Falvo J.V."/>
            <person name="Gerke L.C."/>
            <person name="Carroll A.S."/>
            <person name="Howson R.W."/>
            <person name="Weissman J.S."/>
            <person name="O'Shea E.K."/>
        </authorList>
    </citation>
    <scope>SUBCELLULAR LOCATION [LARGE SCALE ANALYSIS]</scope>
</reference>
<reference key="4">
    <citation type="journal article" date="2003" name="Nature">
        <title>Global analysis of protein expression in yeast.</title>
        <authorList>
            <person name="Ghaemmaghami S."/>
            <person name="Huh W.-K."/>
            <person name="Bower K."/>
            <person name="Howson R.W."/>
            <person name="Belle A."/>
            <person name="Dephoure N."/>
            <person name="O'Shea E.K."/>
            <person name="Weissman J.S."/>
        </authorList>
    </citation>
    <scope>LEVEL OF PROTEIN EXPRESSION [LARGE SCALE ANALYSIS]</scope>
</reference>
<reference key="5">
    <citation type="journal article" date="2005" name="J. Biol. Chem.">
        <title>A novel SET domain methyltransferase modifies ribosomal protein Rpl23ab in yeast.</title>
        <authorList>
            <person name="Porras-Yakushi T.R."/>
            <person name="Whitelegge J.P."/>
            <person name="Miranda T.B."/>
            <person name="Clarke S."/>
        </authorList>
    </citation>
    <scope>FUNCTION</scope>
    <scope>CATALYTIC ACTIVITY</scope>
</reference>
<reference key="6">
    <citation type="journal article" date="2007" name="J. Biol. Chem.">
        <title>Yeast ribosomal/cytochrome c SET domain methyltransferase subfamily: identification of Rpl23ab methylation sites and recognition motifs.</title>
        <authorList>
            <person name="Porras-Yakushi T.R."/>
            <person name="Whitelegge J.P."/>
            <person name="Clarke S."/>
        </authorList>
    </citation>
    <scope>FUNCTION</scope>
</reference>
<reference key="7">
    <citation type="journal article" date="2008" name="Mol. Cell. Proteomics">
        <title>A multidimensional chromatography technology for in-depth phosphoproteome analysis.</title>
        <authorList>
            <person name="Albuquerque C.P."/>
            <person name="Smolka M.B."/>
            <person name="Payne S.H."/>
            <person name="Bafna V."/>
            <person name="Eng J."/>
            <person name="Zhou H."/>
        </authorList>
    </citation>
    <scope>IDENTIFICATION BY MASS SPECTROMETRY [LARGE SCALE ANALYSIS]</scope>
</reference>
<reference key="8">
    <citation type="journal article" date="2012" name="Proteomics">
        <title>Methylation of translation-associated proteins in Saccharomyces cerevisiae: Identification of methylated lysines and their methyltransferases.</title>
        <authorList>
            <person name="Couttas T.A."/>
            <person name="Raftery M.J."/>
            <person name="Padula M.P."/>
            <person name="Herbert B.R."/>
            <person name="Wilkins M.R."/>
        </authorList>
    </citation>
    <scope>FUNCTION</scope>
</reference>
<comment type="function">
    <text evidence="5 6">S-adenosyl-L-methionine-dependent protein-lysine N-methyltransferase that monomethylates ribosomal protein S18 (RPS18A and RPS18B) at 'Lys-48' and dimethylates ribosomal protein L23 (RPL23A and RPL23B) at 'Lys-106' and 'Lys-110'.</text>
</comment>
<comment type="interaction">
    <interactant intactId="EBI-30703">
        <id>Q08961</id>
    </interactant>
    <interactant intactId="EBI-33582">
        <id>Q06338</id>
        <label>BCP1</label>
    </interactant>
    <organismsDiffer>false</organismsDiffer>
    <experiments>3</experiments>
</comment>
<comment type="subcellular location">
    <subcellularLocation>
        <location evidence="3">Cytoplasm</location>
    </subcellularLocation>
    <subcellularLocation>
        <location evidence="3">Nucleus</location>
    </subcellularLocation>
</comment>
<comment type="miscellaneous">
    <text evidence="4">Present with 4800 molecules/cell in log phase SD medium.</text>
</comment>
<comment type="similarity">
    <text evidence="2 8">Belongs to the class V-like SAM-binding methyltransferase superfamily. RKM1 family.</text>
</comment>
<name>RKM1_YEAST</name>
<feature type="chain" id="PRO_0000228984" description="Ribosomal lysine N-methyltransferase 1">
    <location>
        <begin position="1"/>
        <end position="583"/>
    </location>
</feature>
<feature type="domain" description="SET" evidence="2">
    <location>
        <begin position="22"/>
        <end position="274"/>
    </location>
</feature>
<feature type="coiled-coil region" evidence="1">
    <location>
        <begin position="378"/>
        <end position="407"/>
    </location>
</feature>
<feature type="coiled-coil region" evidence="1">
    <location>
        <begin position="433"/>
        <end position="459"/>
    </location>
</feature>
<feature type="binding site" evidence="2">
    <location>
        <position position="273"/>
    </location>
    <ligand>
        <name>S-adenosyl-L-methionine</name>
        <dbReference type="ChEBI" id="CHEBI:59789"/>
    </ligand>
</feature>